<dbReference type="EMBL" id="AM889285">
    <property type="protein sequence ID" value="CAP57325.1"/>
    <property type="molecule type" value="Genomic_DNA"/>
</dbReference>
<dbReference type="EMBL" id="CP001189">
    <property type="protein sequence ID" value="ACI52718.1"/>
    <property type="molecule type" value="Genomic_DNA"/>
</dbReference>
<dbReference type="RefSeq" id="WP_012227921.1">
    <property type="nucleotide sequence ID" value="NC_010125.1"/>
</dbReference>
<dbReference type="SMR" id="A9H3J7"/>
<dbReference type="STRING" id="272568.GDI3382"/>
<dbReference type="KEGG" id="gdi:GDI3382"/>
<dbReference type="KEGG" id="gdj:Gdia_2988"/>
<dbReference type="eggNOG" id="COG0099">
    <property type="taxonomic scope" value="Bacteria"/>
</dbReference>
<dbReference type="HOGENOM" id="CLU_103849_1_2_5"/>
<dbReference type="OrthoDB" id="9803610at2"/>
<dbReference type="Proteomes" id="UP000001176">
    <property type="component" value="Chromosome"/>
</dbReference>
<dbReference type="GO" id="GO:0005829">
    <property type="term" value="C:cytosol"/>
    <property type="evidence" value="ECO:0007669"/>
    <property type="project" value="TreeGrafter"/>
</dbReference>
<dbReference type="GO" id="GO:0015935">
    <property type="term" value="C:small ribosomal subunit"/>
    <property type="evidence" value="ECO:0007669"/>
    <property type="project" value="TreeGrafter"/>
</dbReference>
<dbReference type="GO" id="GO:0019843">
    <property type="term" value="F:rRNA binding"/>
    <property type="evidence" value="ECO:0007669"/>
    <property type="project" value="UniProtKB-UniRule"/>
</dbReference>
<dbReference type="GO" id="GO:0003735">
    <property type="term" value="F:structural constituent of ribosome"/>
    <property type="evidence" value="ECO:0007669"/>
    <property type="project" value="InterPro"/>
</dbReference>
<dbReference type="GO" id="GO:0000049">
    <property type="term" value="F:tRNA binding"/>
    <property type="evidence" value="ECO:0007669"/>
    <property type="project" value="UniProtKB-UniRule"/>
</dbReference>
<dbReference type="GO" id="GO:0006412">
    <property type="term" value="P:translation"/>
    <property type="evidence" value="ECO:0007669"/>
    <property type="project" value="UniProtKB-UniRule"/>
</dbReference>
<dbReference type="FunFam" id="1.10.8.50:FF:000001">
    <property type="entry name" value="30S ribosomal protein S13"/>
    <property type="match status" value="1"/>
</dbReference>
<dbReference type="FunFam" id="4.10.910.10:FF:000001">
    <property type="entry name" value="30S ribosomal protein S13"/>
    <property type="match status" value="1"/>
</dbReference>
<dbReference type="Gene3D" id="1.10.8.50">
    <property type="match status" value="1"/>
</dbReference>
<dbReference type="Gene3D" id="4.10.910.10">
    <property type="entry name" value="30s ribosomal protein s13, domain 2"/>
    <property type="match status" value="1"/>
</dbReference>
<dbReference type="HAMAP" id="MF_01315">
    <property type="entry name" value="Ribosomal_uS13"/>
    <property type="match status" value="1"/>
</dbReference>
<dbReference type="InterPro" id="IPR027437">
    <property type="entry name" value="Rbsml_uS13_C"/>
</dbReference>
<dbReference type="InterPro" id="IPR001892">
    <property type="entry name" value="Ribosomal_uS13"/>
</dbReference>
<dbReference type="InterPro" id="IPR010979">
    <property type="entry name" value="Ribosomal_uS13-like_H2TH"/>
</dbReference>
<dbReference type="InterPro" id="IPR019980">
    <property type="entry name" value="Ribosomal_uS13_bac-type"/>
</dbReference>
<dbReference type="InterPro" id="IPR018269">
    <property type="entry name" value="Ribosomal_uS13_CS"/>
</dbReference>
<dbReference type="NCBIfam" id="TIGR03631">
    <property type="entry name" value="uS13_bact"/>
    <property type="match status" value="1"/>
</dbReference>
<dbReference type="PANTHER" id="PTHR10871">
    <property type="entry name" value="30S RIBOSOMAL PROTEIN S13/40S RIBOSOMAL PROTEIN S18"/>
    <property type="match status" value="1"/>
</dbReference>
<dbReference type="PANTHER" id="PTHR10871:SF1">
    <property type="entry name" value="SMALL RIBOSOMAL SUBUNIT PROTEIN US13M"/>
    <property type="match status" value="1"/>
</dbReference>
<dbReference type="Pfam" id="PF00416">
    <property type="entry name" value="Ribosomal_S13"/>
    <property type="match status" value="1"/>
</dbReference>
<dbReference type="PIRSF" id="PIRSF002134">
    <property type="entry name" value="Ribosomal_S13"/>
    <property type="match status" value="1"/>
</dbReference>
<dbReference type="SUPFAM" id="SSF46946">
    <property type="entry name" value="S13-like H2TH domain"/>
    <property type="match status" value="1"/>
</dbReference>
<dbReference type="PROSITE" id="PS00646">
    <property type="entry name" value="RIBOSOMAL_S13_1"/>
    <property type="match status" value="1"/>
</dbReference>
<dbReference type="PROSITE" id="PS50159">
    <property type="entry name" value="RIBOSOMAL_S13_2"/>
    <property type="match status" value="1"/>
</dbReference>
<comment type="function">
    <text evidence="1">Located at the top of the head of the 30S subunit, it contacts several helices of the 16S rRNA. In the 70S ribosome it contacts the 23S rRNA (bridge B1a) and protein L5 of the 50S subunit (bridge B1b), connecting the 2 subunits; these bridges are implicated in subunit movement. Contacts the tRNAs in the A and P-sites.</text>
</comment>
<comment type="subunit">
    <text evidence="1">Part of the 30S ribosomal subunit. Forms a loose heterodimer with protein S19. Forms two bridges to the 50S subunit in the 70S ribosome.</text>
</comment>
<comment type="similarity">
    <text evidence="1">Belongs to the universal ribosomal protein uS13 family.</text>
</comment>
<organism>
    <name type="scientific">Gluconacetobacter diazotrophicus (strain ATCC 49037 / DSM 5601 / CCUG 37298 / CIP 103539 / LMG 7603 / PAl5)</name>
    <dbReference type="NCBI Taxonomy" id="272568"/>
    <lineage>
        <taxon>Bacteria</taxon>
        <taxon>Pseudomonadati</taxon>
        <taxon>Pseudomonadota</taxon>
        <taxon>Alphaproteobacteria</taxon>
        <taxon>Acetobacterales</taxon>
        <taxon>Acetobacteraceae</taxon>
        <taxon>Gluconacetobacter</taxon>
    </lineage>
</organism>
<protein>
    <recommendedName>
        <fullName evidence="1">Small ribosomal subunit protein uS13</fullName>
    </recommendedName>
    <alternativeName>
        <fullName evidence="2">30S ribosomal protein S13</fullName>
    </alternativeName>
</protein>
<proteinExistence type="inferred from homology"/>
<keyword id="KW-1185">Reference proteome</keyword>
<keyword id="KW-0687">Ribonucleoprotein</keyword>
<keyword id="KW-0689">Ribosomal protein</keyword>
<keyword id="KW-0694">RNA-binding</keyword>
<keyword id="KW-0699">rRNA-binding</keyword>
<keyword id="KW-0820">tRNA-binding</keyword>
<accession>A9H3J7</accession>
<accession>B5ZIS8</accession>
<feature type="chain" id="PRO_1000086242" description="Small ribosomal subunit protein uS13">
    <location>
        <begin position="1"/>
        <end position="125"/>
    </location>
</feature>
<sequence>MARIAGVNIPTNKRVTIGLRYIYGIGETKAEEICRRLEIPAERRVNELSDDEILKIRELIDSEYRVEGDLRREVAMNIKRLMDLGCYRGLRHRRGLPVRGQRTHTNARTRKGKAVAIAGKKKATR</sequence>
<reference key="1">
    <citation type="journal article" date="2009" name="BMC Genomics">
        <title>Complete genome sequence of the sugarcane nitrogen-fixing endophyte Gluconacetobacter diazotrophicus Pal5.</title>
        <authorList>
            <person name="Bertalan M."/>
            <person name="Albano R."/>
            <person name="de Padua V."/>
            <person name="Rouws L."/>
            <person name="Rojas C."/>
            <person name="Hemerly A."/>
            <person name="Teixeira K."/>
            <person name="Schwab S."/>
            <person name="Araujo J."/>
            <person name="Oliveira A."/>
            <person name="Franca L."/>
            <person name="Magalhaes V."/>
            <person name="Alqueres S."/>
            <person name="Cardoso A."/>
            <person name="Almeida W."/>
            <person name="Loureiro M.M."/>
            <person name="Nogueira E."/>
            <person name="Cidade D."/>
            <person name="Oliveira D."/>
            <person name="Simao T."/>
            <person name="Macedo J."/>
            <person name="Valadao A."/>
            <person name="Dreschsel M."/>
            <person name="Freitas F."/>
            <person name="Vidal M."/>
            <person name="Guedes H."/>
            <person name="Rodrigues E."/>
            <person name="Meneses C."/>
            <person name="Brioso P."/>
            <person name="Pozzer L."/>
            <person name="Figueiredo D."/>
            <person name="Montano H."/>
            <person name="Junior J."/>
            <person name="de Souza Filho G."/>
            <person name="Martin Quintana Flores V."/>
            <person name="Ferreira B."/>
            <person name="Branco A."/>
            <person name="Gonzalez P."/>
            <person name="Guillobel H."/>
            <person name="Lemos M."/>
            <person name="Seibel L."/>
            <person name="Macedo J."/>
            <person name="Alves-Ferreira M."/>
            <person name="Sachetto-Martins G."/>
            <person name="Coelho A."/>
            <person name="Santos E."/>
            <person name="Amaral G."/>
            <person name="Neves A."/>
            <person name="Pacheco A.B."/>
            <person name="Carvalho D."/>
            <person name="Lery L."/>
            <person name="Bisch P."/>
            <person name="Rossle S.C."/>
            <person name="Urmenyi T."/>
            <person name="Rael Pereira A."/>
            <person name="Silva R."/>
            <person name="Rondinelli E."/>
            <person name="von Kruger W."/>
            <person name="Martins O."/>
            <person name="Baldani J.I."/>
            <person name="Ferreira P.C."/>
        </authorList>
    </citation>
    <scope>NUCLEOTIDE SEQUENCE [LARGE SCALE GENOMIC DNA]</scope>
    <source>
        <strain>ATCC 49037 / DSM 5601 / CCUG 37298 / CIP 103539 / LMG 7603 / PAl5</strain>
    </source>
</reference>
<reference key="2">
    <citation type="journal article" date="2010" name="Stand. Genomic Sci.">
        <title>Two genome sequences of the same bacterial strain, Gluconacetobacter diazotrophicus PAl 5, suggest a new standard in genome sequence submission.</title>
        <authorList>
            <person name="Giongo A."/>
            <person name="Tyler H.L."/>
            <person name="Zipperer U.N."/>
            <person name="Triplett E.W."/>
        </authorList>
    </citation>
    <scope>NUCLEOTIDE SEQUENCE [LARGE SCALE GENOMIC DNA]</scope>
    <source>
        <strain>ATCC 49037 / DSM 5601 / CCUG 37298 / CIP 103539 / LMG 7603 / PAl5</strain>
    </source>
</reference>
<gene>
    <name evidence="1" type="primary">rpsM</name>
    <name type="ordered locus">GDI3382</name>
    <name type="ordered locus">Gdia_2988</name>
</gene>
<name>RS13_GLUDA</name>
<evidence type="ECO:0000255" key="1">
    <source>
        <dbReference type="HAMAP-Rule" id="MF_01315"/>
    </source>
</evidence>
<evidence type="ECO:0000305" key="2"/>